<reference key="1">
    <citation type="journal article" date="2008" name="J. Bacteriol.">
        <title>The complete genome sequence of Escherichia coli DH10B: insights into the biology of a laboratory workhorse.</title>
        <authorList>
            <person name="Durfee T."/>
            <person name="Nelson R."/>
            <person name="Baldwin S."/>
            <person name="Plunkett G. III"/>
            <person name="Burland V."/>
            <person name="Mau B."/>
            <person name="Petrosino J.F."/>
            <person name="Qin X."/>
            <person name="Muzny D.M."/>
            <person name="Ayele M."/>
            <person name="Gibbs R.A."/>
            <person name="Csorgo B."/>
            <person name="Posfai G."/>
            <person name="Weinstock G.M."/>
            <person name="Blattner F.R."/>
        </authorList>
    </citation>
    <scope>NUCLEOTIDE SEQUENCE [LARGE SCALE GENOMIC DNA]</scope>
    <source>
        <strain>K12 / DH10B</strain>
    </source>
</reference>
<dbReference type="EC" id="3.1.3.-" evidence="1"/>
<dbReference type="EMBL" id="CP000948">
    <property type="protein sequence ID" value="ACB03412.1"/>
    <property type="molecule type" value="Genomic_DNA"/>
</dbReference>
<dbReference type="RefSeq" id="WP_000879112.1">
    <property type="nucleotide sequence ID" value="NC_010473.1"/>
</dbReference>
<dbReference type="SMR" id="B1X8W5"/>
<dbReference type="KEGG" id="ecd:ECDH10B_2412"/>
<dbReference type="HOGENOM" id="CLU_106705_1_0_6"/>
<dbReference type="UniPathway" id="UPA00451"/>
<dbReference type="GO" id="GO:0042597">
    <property type="term" value="C:periplasmic space"/>
    <property type="evidence" value="ECO:0007669"/>
    <property type="project" value="UniProtKB-SubCell"/>
</dbReference>
<dbReference type="GO" id="GO:0016791">
    <property type="term" value="F:phosphatase activity"/>
    <property type="evidence" value="ECO:0007669"/>
    <property type="project" value="UniProtKB-UniRule"/>
</dbReference>
<dbReference type="GO" id="GO:0008653">
    <property type="term" value="P:lipopolysaccharide metabolic process"/>
    <property type="evidence" value="ECO:0007669"/>
    <property type="project" value="UniProtKB-UniRule"/>
</dbReference>
<dbReference type="CDD" id="cd07040">
    <property type="entry name" value="HP"/>
    <property type="match status" value="1"/>
</dbReference>
<dbReference type="Gene3D" id="3.40.50.1240">
    <property type="entry name" value="Phosphoglycerate mutase-like"/>
    <property type="match status" value="1"/>
</dbReference>
<dbReference type="HAMAP" id="MF_01868">
    <property type="entry name" value="Ais"/>
    <property type="match status" value="1"/>
</dbReference>
<dbReference type="InterPro" id="IPR013078">
    <property type="entry name" value="His_Pase_superF_clade-1"/>
</dbReference>
<dbReference type="InterPro" id="IPR029033">
    <property type="entry name" value="His_PPase_superfam"/>
</dbReference>
<dbReference type="InterPro" id="IPR011310">
    <property type="entry name" value="LipoPS_heptP_Pase"/>
</dbReference>
<dbReference type="NCBIfam" id="NF011945">
    <property type="entry name" value="PRK15416.1"/>
    <property type="match status" value="1"/>
</dbReference>
<dbReference type="Pfam" id="PF00300">
    <property type="entry name" value="His_Phos_1"/>
    <property type="match status" value="1"/>
</dbReference>
<dbReference type="PIRSF" id="PIRSF011416">
    <property type="entry name" value="Ais-TraG-AfrS"/>
    <property type="match status" value="1"/>
</dbReference>
<dbReference type="SUPFAM" id="SSF53254">
    <property type="entry name" value="Phosphoglycerate mutase-like"/>
    <property type="match status" value="1"/>
</dbReference>
<keyword id="KW-0378">Hydrolase</keyword>
<keyword id="KW-0574">Periplasm</keyword>
<keyword id="KW-0732">Signal</keyword>
<gene>
    <name evidence="1" type="primary">ais</name>
    <name type="ordered locus">ECDH10B_2412</name>
</gene>
<feature type="signal peptide" evidence="1">
    <location>
        <begin position="1"/>
        <end position="25"/>
    </location>
</feature>
<feature type="chain" id="PRO_0000380556" description="Lipopolysaccharide core heptose(II)-phosphate phosphatase">
    <location>
        <begin position="26"/>
        <end position="200"/>
    </location>
</feature>
<accession>B1X8W5</accession>
<name>AIS_ECODH</name>
<comment type="function">
    <text evidence="1">Catalyzes the dephosphorylation of heptose(II) of the outer membrane lipopolysaccharide core.</text>
</comment>
<comment type="pathway">
    <text evidence="1">Bacterial outer membrane biogenesis; lipopolysaccharide metabolism.</text>
</comment>
<comment type="subcellular location">
    <subcellularLocation>
        <location evidence="1">Periplasm</location>
    </subcellularLocation>
</comment>
<comment type="similarity">
    <text evidence="1">Belongs to the phosphoglycerate mutase family. Ais subfamily.</text>
</comment>
<proteinExistence type="inferred from homology"/>
<sequence>MLAFCRSSLKSKKYIIILLALAAIAGLGTHAAWSSNGLPRIDNKTLARLAQQHPVVVLFRHAERCDRSTNQCLSDKTGITVKGTQDARELGNAFSADIPDFDLYSSNTVRTIQSATWFSAGKKLTVDKRLLQCGNEIYSAIKDLQSKAPDKNIVIFTHNHCLTYIAKDKRDATFKPDYLDGLVMHVEKGKVYLDGEFVNH</sequence>
<evidence type="ECO:0000255" key="1">
    <source>
        <dbReference type="HAMAP-Rule" id="MF_01868"/>
    </source>
</evidence>
<protein>
    <recommendedName>
        <fullName evidence="1">Lipopolysaccharide core heptose(II)-phosphate phosphatase</fullName>
        <ecNumber evidence="1">3.1.3.-</ecNumber>
    </recommendedName>
</protein>
<organism>
    <name type="scientific">Escherichia coli (strain K12 / DH10B)</name>
    <dbReference type="NCBI Taxonomy" id="316385"/>
    <lineage>
        <taxon>Bacteria</taxon>
        <taxon>Pseudomonadati</taxon>
        <taxon>Pseudomonadota</taxon>
        <taxon>Gammaproteobacteria</taxon>
        <taxon>Enterobacterales</taxon>
        <taxon>Enterobacteriaceae</taxon>
        <taxon>Escherichia</taxon>
    </lineage>
</organism>